<organismHost>
    <name type="scientific">Homo sapiens</name>
    <name type="common">Human</name>
    <dbReference type="NCBI Taxonomy" id="9606"/>
</organismHost>
<accession>O57199</accession>
<dbReference type="EMBL" id="U94848">
    <property type="protein sequence ID" value="AAB96497.1"/>
    <property type="molecule type" value="Genomic_DNA"/>
</dbReference>
<dbReference type="EMBL" id="AY603355">
    <property type="protein sequence ID" value="AAT10477.1"/>
    <property type="molecule type" value="Genomic_DNA"/>
</dbReference>
<dbReference type="PIR" id="T37355">
    <property type="entry name" value="T37355"/>
</dbReference>
<dbReference type="SMR" id="O57199"/>
<dbReference type="Proteomes" id="UP000159908">
    <property type="component" value="Segment"/>
</dbReference>
<dbReference type="Proteomes" id="UP000172909">
    <property type="component" value="Segment"/>
</dbReference>
<dbReference type="GO" id="GO:0016020">
    <property type="term" value="C:membrane"/>
    <property type="evidence" value="ECO:0007669"/>
    <property type="project" value="UniProtKB-KW"/>
</dbReference>
<dbReference type="GO" id="GO:0019031">
    <property type="term" value="C:viral envelope"/>
    <property type="evidence" value="ECO:0007669"/>
    <property type="project" value="UniProtKB-KW"/>
</dbReference>
<dbReference type="GO" id="GO:0055036">
    <property type="term" value="C:virion membrane"/>
    <property type="evidence" value="ECO:0007669"/>
    <property type="project" value="UniProtKB-SubCell"/>
</dbReference>
<dbReference type="GO" id="GO:0019064">
    <property type="term" value="P:fusion of virus membrane with host plasma membrane"/>
    <property type="evidence" value="ECO:0007669"/>
    <property type="project" value="UniProtKB-KW"/>
</dbReference>
<dbReference type="GO" id="GO:0046718">
    <property type="term" value="P:symbiont entry into host cell"/>
    <property type="evidence" value="ECO:0007669"/>
    <property type="project" value="UniProtKB-KW"/>
</dbReference>
<dbReference type="InterPro" id="IPR004251">
    <property type="entry name" value="Pox_virus_G9/A16"/>
</dbReference>
<dbReference type="Pfam" id="PF03003">
    <property type="entry name" value="Pox_G9-A16"/>
    <property type="match status" value="1"/>
</dbReference>
<comment type="function">
    <text evidence="1">Component of the entry fusion complex (EFC), which consists of 11 proteins. During cell infection, this complex mediates entry of the virion core into the host cytoplasm by a two-step mechanism consisting of lipid mixing of the viral and cellular membranes and subsequent pore formation.</text>
</comment>
<comment type="subunit">
    <text evidence="1">Interacts with OPG143. Component of the entry fusion complex (EFC) composed of OPG053, OPG076, OPG086, OPG094, OPG095, OPG099, OPG107, OPG143, OPG104, OPG147 and OPG155. Except for OPG095 and OPG053, each of the EFC proteins is required for assembly or stability of the complex.</text>
</comment>
<comment type="subcellular location">
    <subcellularLocation>
        <location evidence="1">Virion membrane</location>
        <topology evidence="1">Single-pass type II membrane protein</topology>
    </subcellularLocation>
    <text evidence="1">Component of the mature virion (MV) membrane. The mature virion is located in the cytoplasm of infected cells and is probably released by cell lysis.</text>
</comment>
<comment type="induction">
    <text evidence="1">Expressed in the late phase of the viral replicative cycle.</text>
</comment>
<comment type="PTM">
    <text evidence="1">Unglycosylated because produced in viral factories instead of the classic ER -Golgi route.</text>
</comment>
<comment type="similarity">
    <text evidence="3">Belongs to the orthopoxvirus OPG086 family.</text>
</comment>
<keyword id="KW-1169">Fusion of virus membrane with host cell membrane</keyword>
<keyword id="KW-1168">Fusion of virus membrane with host membrane</keyword>
<keyword id="KW-0426">Late protein</keyword>
<keyword id="KW-0449">Lipoprotein</keyword>
<keyword id="KW-0472">Membrane</keyword>
<keyword id="KW-0519">Myristate</keyword>
<keyword id="KW-0735">Signal-anchor</keyword>
<keyword id="KW-0812">Transmembrane</keyword>
<keyword id="KW-1133">Transmembrane helix</keyword>
<keyword id="KW-0261">Viral envelope protein</keyword>
<keyword id="KW-1162">Viral penetration into host cytoplasm</keyword>
<keyword id="KW-0946">Virion</keyword>
<keyword id="KW-1160">Virus entry into host cell</keyword>
<sequence>MGGRVSVELPKRDPPPGVPTDEMLLNVDKMHDVIAPAKLLEYVHIGPLAKDKEDKVKKRYPEFRLVNTGPGGLSALLRQSYNGTAPNCCRTFNRTHYWKKDGKISDKYEEGAVLESCWPDVHDTGKCDVDLFDWCQGDTFDRNICHQWIGSAFNRSDRTVEGQQSLINLYNKMQTLCSKDASVPICESFLHHLRAHNTEDSKEMIDYILRQQSADFKQKYMRCSYPTRDKLEESLKYAEPRECWDPECSNANVNFLLTRNYNNLGLCNIVRCNTSVNNLQMDKTSSLRLSCGLSNSDRFSTVPVNRAKVVQHNIKHSFDLKLHLISLLSLLVIWILIVAI</sequence>
<name>PG094_VACCA</name>
<gene>
    <name type="primary">OPG094</name>
    <name type="ordered locus">MVA079R</name>
    <name type="ordered locus">ACAM3000_MVA_079</name>
</gene>
<feature type="initiator methionine" description="Removed; by host" evidence="1">
    <location>
        <position position="1"/>
    </location>
</feature>
<feature type="chain" id="PRO_0000099540" description="Entry-fusion complex protein OPG094">
    <location>
        <begin position="2"/>
        <end position="340"/>
    </location>
</feature>
<feature type="topological domain" description="Virion surface">
    <location>
        <begin position="2"/>
        <end position="319"/>
    </location>
</feature>
<feature type="transmembrane region" description="Helical; Signal-anchor for type II membrane protein" evidence="2">
    <location>
        <begin position="320"/>
        <end position="340"/>
    </location>
</feature>
<feature type="lipid moiety-binding region" description="N-myristoyl glycine; by host" evidence="1">
    <location>
        <position position="2"/>
    </location>
</feature>
<protein>
    <recommendedName>
        <fullName>Entry-fusion complex protein OPG094</fullName>
        <shortName>EFC protein OPG094</shortName>
    </recommendedName>
    <alternativeName>
        <fullName>Myristoylated protein G9</fullName>
    </alternativeName>
</protein>
<proteinExistence type="inferred from homology"/>
<evidence type="ECO:0000250" key="1">
    <source>
        <dbReference type="UniProtKB" id="P07611"/>
    </source>
</evidence>
<evidence type="ECO:0000255" key="2"/>
<evidence type="ECO:0000305" key="3"/>
<organism>
    <name type="scientific">Vaccinia virus (strain Ankara)</name>
    <name type="common">VACV</name>
    <dbReference type="NCBI Taxonomy" id="126794"/>
    <lineage>
        <taxon>Viruses</taxon>
        <taxon>Varidnaviria</taxon>
        <taxon>Bamfordvirae</taxon>
        <taxon>Nucleocytoviricota</taxon>
        <taxon>Pokkesviricetes</taxon>
        <taxon>Chitovirales</taxon>
        <taxon>Poxviridae</taxon>
        <taxon>Chordopoxvirinae</taxon>
        <taxon>Orthopoxvirus</taxon>
        <taxon>Vaccinia virus</taxon>
    </lineage>
</organism>
<reference key="1">
    <citation type="journal article" date="1998" name="Virology">
        <title>The complete genomic sequence of the modified vaccinia Ankara strain: comparison with other orthopoxviruses.</title>
        <authorList>
            <person name="Antoine G."/>
            <person name="Scheiflinger F."/>
            <person name="Dorner F."/>
            <person name="Falkner F.G."/>
        </authorList>
    </citation>
    <scope>NUCLEOTIDE SEQUENCE [LARGE SCALE GENOMIC DNA]</scope>
</reference>
<reference key="2">
    <citation type="submission" date="2004-04" db="EMBL/GenBank/DDBJ databases">
        <authorList>
            <person name="Esposito J.J."/>
            <person name="Frace M."/>
            <person name="Sammons S.A."/>
            <person name="Olsen-Rasmussen M.S."/>
            <person name="Osborne J."/>
            <person name="Khristova M."/>
            <person name="Wohlhueter R.M."/>
        </authorList>
    </citation>
    <scope>NUCLEOTIDE SEQUENCE [LARGE SCALE GENOMIC DNA]</scope>
    <source>
        <strain>Isolate Acambis 3000</strain>
    </source>
</reference>